<accession>A3PLD4</accession>
<proteinExistence type="inferred from homology"/>
<comment type="function">
    <text evidence="1">Negatively regulates transcription of bacterial ribonucleotide reductase nrd genes and operons by binding to NrdR-boxes.</text>
</comment>
<comment type="cofactor">
    <cofactor evidence="1">
        <name>Zn(2+)</name>
        <dbReference type="ChEBI" id="CHEBI:29105"/>
    </cofactor>
    <text evidence="1">Binds 1 zinc ion.</text>
</comment>
<comment type="similarity">
    <text evidence="1">Belongs to the NrdR family.</text>
</comment>
<reference key="1">
    <citation type="submission" date="2007-02" db="EMBL/GenBank/DDBJ databases">
        <title>Complete sequence of chromosome 1 of Rhodobacter sphaeroides ATCC 17029.</title>
        <authorList>
            <person name="Copeland A."/>
            <person name="Lucas S."/>
            <person name="Lapidus A."/>
            <person name="Barry K."/>
            <person name="Detter J.C."/>
            <person name="Glavina del Rio T."/>
            <person name="Hammon N."/>
            <person name="Israni S."/>
            <person name="Dalin E."/>
            <person name="Tice H."/>
            <person name="Pitluck S."/>
            <person name="Kiss H."/>
            <person name="Brettin T."/>
            <person name="Bruce D."/>
            <person name="Han C."/>
            <person name="Tapia R."/>
            <person name="Gilna P."/>
            <person name="Schmutz J."/>
            <person name="Larimer F."/>
            <person name="Land M."/>
            <person name="Hauser L."/>
            <person name="Kyrpides N."/>
            <person name="Mikhailova N."/>
            <person name="Richardson P."/>
            <person name="Mackenzie C."/>
            <person name="Choudhary M."/>
            <person name="Donohue T.J."/>
            <person name="Kaplan S."/>
        </authorList>
    </citation>
    <scope>NUCLEOTIDE SEQUENCE [LARGE SCALE GENOMIC DNA]</scope>
    <source>
        <strain>ATCC 17029 / ATH 2.4.9</strain>
    </source>
</reference>
<organism>
    <name type="scientific">Cereibacter sphaeroides (strain ATCC 17029 / ATH 2.4.9)</name>
    <name type="common">Rhodobacter sphaeroides</name>
    <dbReference type="NCBI Taxonomy" id="349101"/>
    <lineage>
        <taxon>Bacteria</taxon>
        <taxon>Pseudomonadati</taxon>
        <taxon>Pseudomonadota</taxon>
        <taxon>Alphaproteobacteria</taxon>
        <taxon>Rhodobacterales</taxon>
        <taxon>Paracoccaceae</taxon>
        <taxon>Cereibacter</taxon>
    </lineage>
</organism>
<dbReference type="EMBL" id="CP000577">
    <property type="protein sequence ID" value="ABN77150.1"/>
    <property type="molecule type" value="Genomic_DNA"/>
</dbReference>
<dbReference type="RefSeq" id="WP_002720557.1">
    <property type="nucleotide sequence ID" value="NC_009049.1"/>
</dbReference>
<dbReference type="SMR" id="A3PLD4"/>
<dbReference type="GeneID" id="67447126"/>
<dbReference type="KEGG" id="rsh:Rsph17029_2047"/>
<dbReference type="HOGENOM" id="CLU_108412_0_1_5"/>
<dbReference type="GO" id="GO:0005524">
    <property type="term" value="F:ATP binding"/>
    <property type="evidence" value="ECO:0007669"/>
    <property type="project" value="UniProtKB-KW"/>
</dbReference>
<dbReference type="GO" id="GO:0003677">
    <property type="term" value="F:DNA binding"/>
    <property type="evidence" value="ECO:0007669"/>
    <property type="project" value="UniProtKB-KW"/>
</dbReference>
<dbReference type="GO" id="GO:0008270">
    <property type="term" value="F:zinc ion binding"/>
    <property type="evidence" value="ECO:0007669"/>
    <property type="project" value="UniProtKB-UniRule"/>
</dbReference>
<dbReference type="GO" id="GO:0045892">
    <property type="term" value="P:negative regulation of DNA-templated transcription"/>
    <property type="evidence" value="ECO:0007669"/>
    <property type="project" value="UniProtKB-UniRule"/>
</dbReference>
<dbReference type="HAMAP" id="MF_00440">
    <property type="entry name" value="NrdR"/>
    <property type="match status" value="1"/>
</dbReference>
<dbReference type="InterPro" id="IPR005144">
    <property type="entry name" value="ATP-cone_dom"/>
</dbReference>
<dbReference type="InterPro" id="IPR055173">
    <property type="entry name" value="NrdR-like_N"/>
</dbReference>
<dbReference type="InterPro" id="IPR003796">
    <property type="entry name" value="RNR_NrdR-like"/>
</dbReference>
<dbReference type="NCBIfam" id="TIGR00244">
    <property type="entry name" value="transcriptional regulator NrdR"/>
    <property type="match status" value="1"/>
</dbReference>
<dbReference type="PANTHER" id="PTHR30455">
    <property type="entry name" value="TRANSCRIPTIONAL REPRESSOR NRDR"/>
    <property type="match status" value="1"/>
</dbReference>
<dbReference type="PANTHER" id="PTHR30455:SF2">
    <property type="entry name" value="TRANSCRIPTIONAL REPRESSOR NRDR"/>
    <property type="match status" value="1"/>
</dbReference>
<dbReference type="Pfam" id="PF03477">
    <property type="entry name" value="ATP-cone"/>
    <property type="match status" value="1"/>
</dbReference>
<dbReference type="Pfam" id="PF22811">
    <property type="entry name" value="Zn_ribbon_NrdR"/>
    <property type="match status" value="1"/>
</dbReference>
<dbReference type="PROSITE" id="PS51161">
    <property type="entry name" value="ATP_CONE"/>
    <property type="match status" value="1"/>
</dbReference>
<evidence type="ECO:0000255" key="1">
    <source>
        <dbReference type="HAMAP-Rule" id="MF_00440"/>
    </source>
</evidence>
<sequence length="155" mass="17814">MRCPFCGNIDTQVKDSRPAEDHVSIRRRRFCPACGGRFTTYERVQLRDLVVIKSSGKREDFDRTKLERSIRIAMQKRPIEPERIDQMISGIVRRLESLGDTDIPSKVIGEIVMESLARIDTVAYVRFASVYKNFQAADDFDKFVSELRPSAPAEE</sequence>
<keyword id="KW-0067">ATP-binding</keyword>
<keyword id="KW-0238">DNA-binding</keyword>
<keyword id="KW-0479">Metal-binding</keyword>
<keyword id="KW-0547">Nucleotide-binding</keyword>
<keyword id="KW-0678">Repressor</keyword>
<keyword id="KW-0804">Transcription</keyword>
<keyword id="KW-0805">Transcription regulation</keyword>
<keyword id="KW-0862">Zinc</keyword>
<keyword id="KW-0863">Zinc-finger</keyword>
<feature type="chain" id="PRO_1000080811" description="Transcriptional repressor NrdR">
    <location>
        <begin position="1"/>
        <end position="155"/>
    </location>
</feature>
<feature type="domain" description="ATP-cone" evidence="1">
    <location>
        <begin position="49"/>
        <end position="139"/>
    </location>
</feature>
<feature type="zinc finger region" evidence="1">
    <location>
        <begin position="3"/>
        <end position="34"/>
    </location>
</feature>
<gene>
    <name evidence="1" type="primary">nrdR</name>
    <name type="ordered locus">Rsph17029_2047</name>
</gene>
<name>NRDR_CERS1</name>
<protein>
    <recommendedName>
        <fullName evidence="1">Transcriptional repressor NrdR</fullName>
    </recommendedName>
</protein>